<organism>
    <name type="scientific">Human herpesvirus 1 (strain CVG-2)</name>
    <name type="common">HHV-1</name>
    <name type="synonym">Human herpes simplex virus 1</name>
    <dbReference type="NCBI Taxonomy" id="37106"/>
    <lineage>
        <taxon>Viruses</taxon>
        <taxon>Duplodnaviria</taxon>
        <taxon>Heunggongvirae</taxon>
        <taxon>Peploviricota</taxon>
        <taxon>Herviviricetes</taxon>
        <taxon>Herpesvirales</taxon>
        <taxon>Orthoherpesviridae</taxon>
        <taxon>Alphaherpesvirinae</taxon>
        <taxon>Simplexvirus</taxon>
        <taxon>Simplexvirus humanalpha1</taxon>
        <taxon>Human herpesvirus 1</taxon>
    </lineage>
</organism>
<organismHost>
    <name type="scientific">Homo sapiens</name>
    <name type="common">Human</name>
    <dbReference type="NCBI Taxonomy" id="9606"/>
</organismHost>
<protein>
    <recommendedName>
        <fullName>Neurovirulence factor ICP34.5</fullName>
    </recommendedName>
    <alternativeName>
        <fullName>Infected cell protein 34.5</fullName>
    </alternativeName>
    <alternativeName>
        <fullName>protein gamma(1)34.5</fullName>
    </alternativeName>
</protein>
<name>ICP34_HHV1D</name>
<dbReference type="EMBL" id="M33701">
    <property type="protein sequence ID" value="AAA45792.1"/>
    <property type="molecule type" value="Genomic_DNA"/>
</dbReference>
<dbReference type="GO" id="GO:0030430">
    <property type="term" value="C:host cell cytoplasm"/>
    <property type="evidence" value="ECO:0007669"/>
    <property type="project" value="UniProtKB-SubCell"/>
</dbReference>
<dbReference type="GO" id="GO:0044196">
    <property type="term" value="C:host cell nucleolus"/>
    <property type="evidence" value="ECO:0007669"/>
    <property type="project" value="UniProtKB-SubCell"/>
</dbReference>
<dbReference type="GO" id="GO:0044423">
    <property type="term" value="C:virion component"/>
    <property type="evidence" value="ECO:0007669"/>
    <property type="project" value="UniProtKB-KW"/>
</dbReference>
<dbReference type="GO" id="GO:0004865">
    <property type="term" value="F:protein serine/threonine phosphatase inhibitor activity"/>
    <property type="evidence" value="ECO:0007669"/>
    <property type="project" value="UniProtKB-KW"/>
</dbReference>
<dbReference type="GO" id="GO:0034976">
    <property type="term" value="P:response to endoplasmic reticulum stress"/>
    <property type="evidence" value="ECO:0007669"/>
    <property type="project" value="TreeGrafter"/>
</dbReference>
<dbReference type="GO" id="GO:0140321">
    <property type="term" value="P:symbiont-mediated suppression of host autophagy"/>
    <property type="evidence" value="ECO:0007669"/>
    <property type="project" value="UniProtKB-KW"/>
</dbReference>
<dbReference type="GO" id="GO:0052170">
    <property type="term" value="P:symbiont-mediated suppression of host innate immune response"/>
    <property type="evidence" value="ECO:0007669"/>
    <property type="project" value="UniProtKB-KW"/>
</dbReference>
<dbReference type="GO" id="GO:0039606">
    <property type="term" value="P:symbiont-mediated suppression of host translation initiation"/>
    <property type="evidence" value="ECO:0007669"/>
    <property type="project" value="UniProtKB-KW"/>
</dbReference>
<dbReference type="GO" id="GO:0039502">
    <property type="term" value="P:symbiont-mediated suppression of host type I interferon-mediated signaling pathway"/>
    <property type="evidence" value="ECO:0007669"/>
    <property type="project" value="UniProtKB-KW"/>
</dbReference>
<dbReference type="InterPro" id="IPR051254">
    <property type="entry name" value="PPP1R15"/>
</dbReference>
<dbReference type="PANTHER" id="PTHR16489">
    <property type="entry name" value="GH11727P"/>
    <property type="match status" value="1"/>
</dbReference>
<dbReference type="PANTHER" id="PTHR16489:SF14">
    <property type="entry name" value="PROTEIN PHOSPHATASE 1 REGULATORY SUBUNIT 15A"/>
    <property type="match status" value="1"/>
</dbReference>
<evidence type="ECO:0000250" key="1"/>
<evidence type="ECO:0000250" key="2">
    <source>
        <dbReference type="UniProtKB" id="P08353"/>
    </source>
</evidence>
<evidence type="ECO:0000250" key="3">
    <source>
        <dbReference type="UniProtKB" id="P36313"/>
    </source>
</evidence>
<evidence type="ECO:0000256" key="4">
    <source>
        <dbReference type="SAM" id="MobiDB-lite"/>
    </source>
</evidence>
<evidence type="ECO:0000305" key="5"/>
<comment type="function">
    <text evidence="2 3">Inhibits the establishment of the immune response and of the integrated stress response (ISR) in the infected cell (By similarity). Plays essential roles in viral nuclear egress to mediate capsid transit across the nuclear membrane (By similarity). Facilitates nuclear egress cooperatively with host C1QBP and protein kinase C/PKC to induce lamin A/C phosphorylation and subsequent reorganization (By similarity). In turn, lamina disassembles and nuclear egress occurs. Recruits the serine/threonine protein phosphatase PPP1CA/PP1-alpha to dephosphorylate the translation initiation factor EIF2S1/eIF-2alpha, thereby couteracting the host shutoff of protein synthesis involving double-stranded RNA-dependent protein kinase EIF2AK2/PKR (By similarity). In turn, controls host IRF3 activation and subsequently inhibits host interferon response (By similarity). Controls the DNA sensing pathway by interacting with and inhibiting host STING/TMEM173. Also down-modulates the host MHC class II proteins cell surface expression (By similarity). Acts as a neurovirulence factor that has a profound effect on the growth of the virus in central nervous system tissue, by interacting with host BECN1 and thereby antagonizing the host autophagy response (By similarity).</text>
</comment>
<comment type="subunit">
    <text evidence="3">Interacts with host PPP1CA to form a high-molecular-weight complex that dephosphorylates EIF2S1/eIF-2alpha. Interacts with host EIF2S1/eIF-2alpha; this interaction is crucial for the specific dephosphorylation of EIF2S1/eIF-2alpha by PPP1CA. Binds to proliferating cell nuclear antigen (PCNA), which may release host cells from growth arrest and facilitate viral replication. Interacts (via N-terminus) with host C1QBP and PRKCA. Interacts with protein UL31. Interacts with host TBK1. Interacts with host STING/TMEM173; this interaction inhibits the intracellular DNA sensing pathway. Interacts with host BECN1; this interaction modulates host autophagy.</text>
</comment>
<comment type="subcellular location">
    <subcellularLocation>
        <location evidence="2">Host cytoplasm</location>
    </subcellularLocation>
    <subcellularLocation>
        <location evidence="2">Host nucleus</location>
    </subcellularLocation>
    <subcellularLocation>
        <location evidence="2">Host nucleus</location>
        <location evidence="2">Host nucleolus</location>
    </subcellularLocation>
    <subcellularLocation>
        <location evidence="2">Virion</location>
    </subcellularLocation>
    <text evidence="2">At early times in infection, colocalizes with PCNA and replication proteins in the host cell nucleus, before accumulating in the host cytoplasm by 8 to 12 hours post-infection.</text>
</comment>
<comment type="domain">
    <text evidence="1">The triplet repeats region may play a role in modulating virus egress.</text>
</comment>
<comment type="miscellaneous">
    <text evidence="1">ICP34.5 is detected as early as 3 hpi prior to viral replication but reaches maximal levels late in infection. ICP34.5 gene is therefore classified as gamma-1 or leaky late gene (By similarity).</text>
</comment>
<comment type="miscellaneous">
    <text evidence="1">The phosphatase activity of the ICP34.5-PP1 complex toward EIF2S1 is specifically inhibited by Salubrinal, which inhibits viral replication.</text>
</comment>
<comment type="similarity">
    <text evidence="5">Belongs to the PPP1R15 family.</text>
</comment>
<reference key="1">
    <citation type="journal article" date="1990" name="J. Virol.">
        <title>The herpes simplex virus 1 gene for ICP34.5, which maps in inverted repeats, is conserved in several limited-passage isolates but not in strain 17syn+.</title>
        <authorList>
            <person name="Chou J."/>
            <person name="Roizman B."/>
        </authorList>
    </citation>
    <scope>NUCLEOTIDE SEQUENCE [GENOMIC DNA]</scope>
</reference>
<keyword id="KW-1035">Host cytoplasm</keyword>
<keyword id="KW-1048">Host nucleus</keyword>
<keyword id="KW-0945">Host-virus interaction</keyword>
<keyword id="KW-1083">Inhibition of host autophagy by virus</keyword>
<keyword id="KW-1090">Inhibition of host innate immune response by virus</keyword>
<keyword id="KW-1114">Inhibition of host interferon signaling pathway by virus</keyword>
<keyword id="KW-1113">Inhibition of host RLR pathway by virus</keyword>
<keyword id="KW-0922">Interferon antiviral system evasion</keyword>
<keyword id="KW-1126">Modulation of host PP1 activity by virus</keyword>
<keyword id="KW-0677">Repeat</keyword>
<keyword id="KW-0899">Viral immunoevasion</keyword>
<keyword id="KW-0946">Virion</keyword>
<keyword id="KW-0843">Virulence</keyword>
<accession>P37318</accession>
<proteinExistence type="inferred from homology"/>
<gene>
    <name type="primary">RL1</name>
    <name type="synonym">ICP34.5</name>
</gene>
<sequence>MARRRRRHRGPRRPRPPGPTGAVPTAQSQVTSTPNSEPVVRSAPAAAPPPPPAGGPPPSCSLLLRQWLQVPESASDDDDDDDWPDSPPPEPAPEARPTAAAPRPRSPPPGAGPGGGADPSHPPSRPFRLPPRLALRLRVTAEHLARLRLRRAGGEGAPEPPATPATPATPATPATPATPARVRFSPHVRVRHLVVWASAARLARRGSWARERADRARFRRRVAEAEAVIGPCLGPKARARALARGAGPANSV</sequence>
<feature type="chain" id="PRO_0000115808" description="Neurovirulence factor ICP34.5">
    <location>
        <begin position="1"/>
        <end position="252"/>
    </location>
</feature>
<feature type="repeat" description="1">
    <location>
        <begin position="162"/>
        <end position="164"/>
    </location>
</feature>
<feature type="repeat" description="2">
    <location>
        <begin position="165"/>
        <end position="167"/>
    </location>
</feature>
<feature type="repeat" description="3">
    <location>
        <begin position="168"/>
        <end position="170"/>
    </location>
</feature>
<feature type="repeat" description="4">
    <location>
        <begin position="171"/>
        <end position="173"/>
    </location>
</feature>
<feature type="repeat" description="5">
    <location>
        <begin position="174"/>
        <end position="176"/>
    </location>
</feature>
<feature type="repeat" description="6">
    <location>
        <begin position="177"/>
        <end position="179"/>
    </location>
</feature>
<feature type="region of interest" description="Disordered" evidence="4">
    <location>
        <begin position="1"/>
        <end position="129"/>
    </location>
</feature>
<feature type="region of interest" description="Required for nucleolar localization" evidence="1">
    <location>
        <begin position="1"/>
        <end position="17"/>
    </location>
</feature>
<feature type="region of interest" description="Disordered" evidence="4">
    <location>
        <begin position="150"/>
        <end position="179"/>
    </location>
</feature>
<feature type="region of interest" description="6 X 3 AA tandem repeats of A-T-P">
    <location>
        <begin position="162"/>
        <end position="179"/>
    </location>
</feature>
<feature type="region of interest" description="Binding to PP1CA" evidence="1">
    <location>
        <begin position="179"/>
        <end position="192"/>
    </location>
</feature>
<feature type="region of interest" description="Interaction with host PPP1CA" evidence="2">
    <location>
        <begin position="179"/>
        <end position="192"/>
    </location>
</feature>
<feature type="region of interest" description="Important for interferon resistance" evidence="1">
    <location>
        <begin position="194"/>
        <end position="252"/>
    </location>
</feature>
<feature type="region of interest" description="Interaction with host EIF2S1/EIF-2ALPHA" evidence="2">
    <location>
        <begin position="222"/>
        <end position="237"/>
    </location>
</feature>
<feature type="short sequence motif" description="Nuclear export signal" evidence="1">
    <location>
        <begin position="129"/>
        <end position="138"/>
    </location>
</feature>
<feature type="short sequence motif" description="Bipartite nuclear localization signal" evidence="1">
    <location>
        <begin position="204"/>
        <end position="222"/>
    </location>
</feature>
<feature type="compositionally biased region" description="Basic residues" evidence="4">
    <location>
        <begin position="1"/>
        <end position="15"/>
    </location>
</feature>
<feature type="compositionally biased region" description="Polar residues" evidence="4">
    <location>
        <begin position="25"/>
        <end position="36"/>
    </location>
</feature>
<feature type="compositionally biased region" description="Pro residues" evidence="4">
    <location>
        <begin position="46"/>
        <end position="59"/>
    </location>
</feature>
<feature type="compositionally biased region" description="Acidic residues" evidence="4">
    <location>
        <begin position="74"/>
        <end position="84"/>
    </location>
</feature>
<feature type="compositionally biased region" description="Pro residues" evidence="4">
    <location>
        <begin position="85"/>
        <end position="94"/>
    </location>
</feature>
<feature type="compositionally biased region" description="Pro residues" evidence="4">
    <location>
        <begin position="120"/>
        <end position="129"/>
    </location>
</feature>
<feature type="compositionally biased region" description="Low complexity" evidence="4">
    <location>
        <begin position="165"/>
        <end position="179"/>
    </location>
</feature>